<dbReference type="EMBL" id="AY653733">
    <property type="protein sequence ID" value="AAV50652.1"/>
    <property type="molecule type" value="Genomic_DNA"/>
</dbReference>
<dbReference type="SMR" id="Q5UQX0"/>
<dbReference type="KEGG" id="vg:9925005"/>
<dbReference type="OrthoDB" id="12976at10239"/>
<dbReference type="Proteomes" id="UP000001134">
    <property type="component" value="Genome"/>
</dbReference>
<dbReference type="GO" id="GO:0044423">
    <property type="term" value="C:virion component"/>
    <property type="evidence" value="ECO:0007669"/>
    <property type="project" value="UniProtKB-KW"/>
</dbReference>
<dbReference type="Gene3D" id="3.40.50.12760">
    <property type="match status" value="1"/>
</dbReference>
<keyword id="KW-1185">Reference proteome</keyword>
<keyword id="KW-0946">Virion</keyword>
<organism>
    <name type="scientific">Acanthamoeba polyphaga mimivirus</name>
    <name type="common">APMV</name>
    <dbReference type="NCBI Taxonomy" id="212035"/>
    <lineage>
        <taxon>Viruses</taxon>
        <taxon>Varidnaviria</taxon>
        <taxon>Bamfordvirae</taxon>
        <taxon>Nucleocytoviricota</taxon>
        <taxon>Megaviricetes</taxon>
        <taxon>Imitervirales</taxon>
        <taxon>Mimiviridae</taxon>
        <taxon>Megamimivirinae</taxon>
        <taxon>Mimivirus</taxon>
        <taxon>Mimivirus bradfordmassiliense</taxon>
    </lineage>
</organism>
<proteinExistence type="evidence at protein level"/>
<reference key="1">
    <citation type="journal article" date="2004" name="Science">
        <title>The 1.2-megabase genome sequence of Mimivirus.</title>
        <authorList>
            <person name="Raoult D."/>
            <person name="Audic S."/>
            <person name="Robert C."/>
            <person name="Abergel C."/>
            <person name="Renesto P."/>
            <person name="Ogata H."/>
            <person name="La Scola B."/>
            <person name="Susan M."/>
            <person name="Claverie J.-M."/>
        </authorList>
    </citation>
    <scope>NUCLEOTIDE SEQUENCE [LARGE SCALE GENOMIC DNA]</scope>
    <source>
        <strain>Rowbotham-Bradford</strain>
    </source>
</reference>
<reference key="2">
    <citation type="journal article" date="2006" name="J. Virol.">
        <title>Mimivirus giant particles incorporate a large fraction of anonymous and unique gene products.</title>
        <authorList>
            <person name="Renesto P."/>
            <person name="Abergel C."/>
            <person name="Decloquement P."/>
            <person name="Moinier D."/>
            <person name="Azza S."/>
            <person name="Ogata H."/>
            <person name="Fourquet P."/>
            <person name="Gorvel J.-P."/>
            <person name="Claverie J.-M."/>
            <person name="Raoult D."/>
        </authorList>
    </citation>
    <scope>IDENTIFICATION BY MASS SPECTROMETRY [LARGE SCALE ANALYSIS]</scope>
    <scope>SUBCELLULAR LOCATION</scope>
</reference>
<sequence length="348" mass="40346">MKPIIFSLPRVINNESIPPPINKSKIYFDDNPSPKLIKYGFNNISEKMDLNILTSDSHYKAGLNIDFTRDDKNSFVSKTAEIFGNQYDPAFYQAWEILNIFDLINKSESIYTNIPETLLEVTNSHKKLFKTNKQYNITNDINKAINIQLIYSRYSDIDIDENALIQLIYNDLSSLFQMQIQGSNMILQLFNVQTQVTVQLIYLLSSYYTEAYLYKPESSSDLSDNKYLILIGLRNKSTIDLPKFPSNRYLLSLGVNDIPNNFTSVIQCMNSFVMPNKYETYLKIINYLNTKVYEGATYQDLIKEQNKFTLDWINIFTEPDKIKTILDDSINFVDKNCANSSKLDELFS</sequence>
<evidence type="ECO:0000269" key="1">
    <source>
    </source>
</evidence>
<accession>Q5UQX0</accession>
<protein>
    <recommendedName>
        <fullName>Uncharacterized protein R383</fullName>
    </recommendedName>
</protein>
<name>YR383_MIMIV</name>
<feature type="chain" id="PRO_0000250628" description="Uncharacterized protein R383">
    <location>
        <begin position="1"/>
        <end position="348"/>
    </location>
</feature>
<comment type="subcellular location">
    <subcellularLocation>
        <location evidence="1">Virion</location>
    </subcellularLocation>
</comment>
<gene>
    <name type="ordered locus">MIMI_R383</name>
</gene>
<organismHost>
    <name type="scientific">Acanthamoeba polyphaga</name>
    <name type="common">Amoeba</name>
    <dbReference type="NCBI Taxonomy" id="5757"/>
</organismHost>